<protein>
    <recommendedName>
        <fullName evidence="1">Undecaprenyl-phosphate alpha-N-acetylglucosaminyl 1-phosphate transferase</fullName>
        <ecNumber evidence="1">2.7.8.33</ecNumber>
    </recommendedName>
    <alternativeName>
        <fullName evidence="1">UDP-GlcNAc:undecaprenyl-phosphate GlcNAc-1-phosphate transferase</fullName>
    </alternativeName>
    <alternativeName>
        <fullName evidence="1">Undecaprenyl-phosphate GlcNAc-1-phosphate transferase</fullName>
    </alternativeName>
</protein>
<comment type="function">
    <text evidence="1 2">Catalyzes the transfer of the GlcNAc-1-phosphate moiety from UDP-GlcNAc onto the carrier lipid undecaprenyl phosphate (C55-P), yielding GlcNAc-pyrophosphoryl-undecaprenyl (GlcNAc-PP-C55).</text>
</comment>
<comment type="catalytic activity">
    <reaction evidence="1">
        <text>di-trans,octa-cis-undecaprenyl phosphate + UDP-N-acetyl-alpha-D-glucosamine = N-acetyl-alpha-D-glucosaminyl-di-trans,octa-cis-undecaprenyl diphosphate + UMP</text>
        <dbReference type="Rhea" id="RHEA:28090"/>
        <dbReference type="ChEBI" id="CHEBI:57705"/>
        <dbReference type="ChEBI" id="CHEBI:57865"/>
        <dbReference type="ChEBI" id="CHEBI:60392"/>
        <dbReference type="ChEBI" id="CHEBI:62959"/>
        <dbReference type="EC" id="2.7.8.33"/>
    </reaction>
</comment>
<comment type="cofactor">
    <cofactor evidence="1">
        <name>Mg(2+)</name>
        <dbReference type="ChEBI" id="CHEBI:18420"/>
    </cofactor>
</comment>
<comment type="cofactor">
    <cofactor evidence="1">
        <name>Mn(2+)</name>
        <dbReference type="ChEBI" id="CHEBI:29035"/>
    </cofactor>
</comment>
<comment type="pathway">
    <text evidence="1">Bacterial outer membrane biogenesis; LPS O-antigen biosynthesis.</text>
</comment>
<comment type="pathway">
    <text evidence="1">Bacterial outer membrane biogenesis; enterobacterial common antigen biosynthesis.</text>
</comment>
<comment type="subcellular location">
    <subcellularLocation>
        <location evidence="1">Cell inner membrane</location>
        <topology evidence="1">Multi-pass membrane protein</topology>
    </subcellularLocation>
</comment>
<comment type="disruption phenotype">
    <text evidence="2">A transposon mutant in wecA/rfe allows HeLa cell invasion but no cell spreading. Shows decreased secretion of IscA, a protein required for cell spreading. The lipopolysaccharide produced is of a size consistent with it containing the core component but no O-antigen side chain.</text>
</comment>
<comment type="similarity">
    <text evidence="1">Belongs to the glycosyltransferase 4 family. WecA subfamily.</text>
</comment>
<feature type="chain" id="PRO_0000108946" description="Undecaprenyl-phosphate alpha-N-acetylglucosaminyl 1-phosphate transferase">
    <location>
        <begin position="1"/>
        <end position="367"/>
    </location>
</feature>
<feature type="transmembrane region" description="Helical" evidence="1">
    <location>
        <begin position="3"/>
        <end position="23"/>
    </location>
</feature>
<feature type="transmembrane region" description="Helical" evidence="1">
    <location>
        <begin position="46"/>
        <end position="66"/>
    </location>
</feature>
<feature type="transmembrane region" description="Helical" evidence="1">
    <location>
        <begin position="69"/>
        <end position="89"/>
    </location>
</feature>
<feature type="transmembrane region" description="Helical" evidence="1">
    <location>
        <begin position="132"/>
        <end position="152"/>
    </location>
</feature>
<feature type="transmembrane region" description="Helical" evidence="1">
    <location>
        <begin position="158"/>
        <end position="178"/>
    </location>
</feature>
<feature type="transmembrane region" description="Helical" evidence="1">
    <location>
        <begin position="187"/>
        <end position="207"/>
    </location>
</feature>
<feature type="transmembrane region" description="Helical" evidence="1">
    <location>
        <begin position="213"/>
        <end position="233"/>
    </location>
</feature>
<feature type="transmembrane region" description="Helical" evidence="1">
    <location>
        <begin position="242"/>
        <end position="262"/>
    </location>
</feature>
<feature type="transmembrane region" description="Helical" evidence="1">
    <location>
        <begin position="294"/>
        <end position="314"/>
    </location>
</feature>
<feature type="transmembrane region" description="Helical" evidence="1">
    <location>
        <begin position="318"/>
        <end position="338"/>
    </location>
</feature>
<accession>P0AC80</accession>
<accession>P24235</accession>
<accession>P76751</accession>
<accession>Q9F8C8</accession>
<evidence type="ECO:0000255" key="1">
    <source>
        <dbReference type="HAMAP-Rule" id="MF_02030"/>
    </source>
</evidence>
<evidence type="ECO:0000269" key="2">
    <source>
    </source>
</evidence>
<reference key="1">
    <citation type="journal article" date="2002" name="Nucleic Acids Res.">
        <title>Genome sequence of Shigella flexneri 2a: insights into pathogenicity through comparison with genomes of Escherichia coli K12 and O157.</title>
        <authorList>
            <person name="Jin Q."/>
            <person name="Yuan Z."/>
            <person name="Xu J."/>
            <person name="Wang Y."/>
            <person name="Shen Y."/>
            <person name="Lu W."/>
            <person name="Wang J."/>
            <person name="Liu H."/>
            <person name="Yang J."/>
            <person name="Yang F."/>
            <person name="Zhang X."/>
            <person name="Zhang J."/>
            <person name="Yang G."/>
            <person name="Wu H."/>
            <person name="Qu D."/>
            <person name="Dong J."/>
            <person name="Sun L."/>
            <person name="Xue Y."/>
            <person name="Zhao A."/>
            <person name="Gao Y."/>
            <person name="Zhu J."/>
            <person name="Kan B."/>
            <person name="Ding K."/>
            <person name="Chen S."/>
            <person name="Cheng H."/>
            <person name="Yao Z."/>
            <person name="He B."/>
            <person name="Chen R."/>
            <person name="Ma D."/>
            <person name="Qiang B."/>
            <person name="Wen Y."/>
            <person name="Hou Y."/>
            <person name="Yu J."/>
        </authorList>
    </citation>
    <scope>NUCLEOTIDE SEQUENCE [LARGE SCALE GENOMIC DNA]</scope>
    <source>
        <strain>301 / Serotype 2a</strain>
    </source>
</reference>
<reference key="2">
    <citation type="journal article" date="2003" name="Infect. Immun.">
        <title>Complete genome sequence and comparative genomics of Shigella flexneri serotype 2a strain 2457T.</title>
        <authorList>
            <person name="Wei J."/>
            <person name="Goldberg M.B."/>
            <person name="Burland V."/>
            <person name="Venkatesan M.M."/>
            <person name="Deng W."/>
            <person name="Fournier G."/>
            <person name="Mayhew G.F."/>
            <person name="Plunkett G. III"/>
            <person name="Rose D.J."/>
            <person name="Darling A."/>
            <person name="Mau B."/>
            <person name="Perna N.T."/>
            <person name="Payne S.M."/>
            <person name="Runyen-Janecky L.J."/>
            <person name="Zhou S."/>
            <person name="Schwartz D.C."/>
            <person name="Blattner F.R."/>
        </authorList>
    </citation>
    <scope>NUCLEOTIDE SEQUENCE [LARGE SCALE GENOMIC DNA]</scope>
    <source>
        <strain>ATCC 700930 / 2457T / Serotype 2a</strain>
    </source>
</reference>
<reference key="3">
    <citation type="journal article" date="1995" name="Infect. Immun.">
        <title>Avirulence of rough mutants of Shigella flexneri: requirement of O antigen for correct unipolar localization of IcsA in the bacterial outer membrane.</title>
        <authorList>
            <person name="Sandlin R.C."/>
            <person name="Lampel K.A."/>
            <person name="Keasler S.P."/>
            <person name="Goldberg M.B."/>
            <person name="Stolzer A.L."/>
            <person name="Maurelli A.T."/>
        </authorList>
    </citation>
    <scope>FUNCTION</scope>
    <scope>DISRUPTION PHENOTYPE</scope>
    <source>
        <strain>ATCC 700930 / 2457T / Serotype 2a</strain>
    </source>
</reference>
<keyword id="KW-0997">Cell inner membrane</keyword>
<keyword id="KW-1003">Cell membrane</keyword>
<keyword id="KW-0328">Glycosyltransferase</keyword>
<keyword id="KW-0448">Lipopolysaccharide biosynthesis</keyword>
<keyword id="KW-0460">Magnesium</keyword>
<keyword id="KW-0464">Manganese</keyword>
<keyword id="KW-0472">Membrane</keyword>
<keyword id="KW-1185">Reference proteome</keyword>
<keyword id="KW-0808">Transferase</keyword>
<keyword id="KW-0812">Transmembrane</keyword>
<keyword id="KW-1133">Transmembrane helix</keyword>
<keyword id="KW-0843">Virulence</keyword>
<organism>
    <name type="scientific">Shigella flexneri</name>
    <dbReference type="NCBI Taxonomy" id="623"/>
    <lineage>
        <taxon>Bacteria</taxon>
        <taxon>Pseudomonadati</taxon>
        <taxon>Pseudomonadota</taxon>
        <taxon>Gammaproteobacteria</taxon>
        <taxon>Enterobacterales</taxon>
        <taxon>Enterobacteriaceae</taxon>
        <taxon>Shigella</taxon>
    </lineage>
</organism>
<name>WECA_SHIFL</name>
<gene>
    <name evidence="1" type="primary">wecA</name>
    <name type="synonym">rfe</name>
    <name type="ordered locus">SF3858</name>
    <name type="ordered locus">S3902</name>
</gene>
<dbReference type="EC" id="2.7.8.33" evidence="1"/>
<dbReference type="EMBL" id="AE005674">
    <property type="protein sequence ID" value="AAN45295.1"/>
    <property type="molecule type" value="Genomic_DNA"/>
</dbReference>
<dbReference type="EMBL" id="AE014073">
    <property type="protein sequence ID" value="AAP18903.1"/>
    <property type="molecule type" value="Genomic_DNA"/>
</dbReference>
<dbReference type="RefSeq" id="NP_709588.1">
    <property type="nucleotide sequence ID" value="NC_004337.2"/>
</dbReference>
<dbReference type="RefSeq" id="WP_001050960.1">
    <property type="nucleotide sequence ID" value="NZ_WPGW01000028.1"/>
</dbReference>
<dbReference type="SMR" id="P0AC80"/>
<dbReference type="STRING" id="198214.SF3858"/>
<dbReference type="PaxDb" id="198214-SF3858"/>
<dbReference type="GeneID" id="1026035"/>
<dbReference type="GeneID" id="93778160"/>
<dbReference type="KEGG" id="sfl:SF3858"/>
<dbReference type="KEGG" id="sfx:S3902"/>
<dbReference type="PATRIC" id="fig|198214.7.peg.4548"/>
<dbReference type="HOGENOM" id="CLU_023982_1_0_6"/>
<dbReference type="UniPathway" id="UPA00281"/>
<dbReference type="UniPathway" id="UPA00566"/>
<dbReference type="Proteomes" id="UP000001006">
    <property type="component" value="Chromosome"/>
</dbReference>
<dbReference type="Proteomes" id="UP000002673">
    <property type="component" value="Chromosome"/>
</dbReference>
<dbReference type="GO" id="GO:0009276">
    <property type="term" value="C:Gram-negative-bacterium-type cell wall"/>
    <property type="evidence" value="ECO:0000250"/>
    <property type="project" value="UniProtKB"/>
</dbReference>
<dbReference type="GO" id="GO:0005886">
    <property type="term" value="C:plasma membrane"/>
    <property type="evidence" value="ECO:0007669"/>
    <property type="project" value="UniProtKB-SubCell"/>
</dbReference>
<dbReference type="GO" id="GO:0016757">
    <property type="term" value="F:glycosyltransferase activity"/>
    <property type="evidence" value="ECO:0007669"/>
    <property type="project" value="UniProtKB-KW"/>
</dbReference>
<dbReference type="GO" id="GO:0000287">
    <property type="term" value="F:magnesium ion binding"/>
    <property type="evidence" value="ECO:0000250"/>
    <property type="project" value="UniProtKB"/>
</dbReference>
<dbReference type="GO" id="GO:0030145">
    <property type="term" value="F:manganese ion binding"/>
    <property type="evidence" value="ECO:0000250"/>
    <property type="project" value="UniProtKB"/>
</dbReference>
<dbReference type="GO" id="GO:0016780">
    <property type="term" value="F:phosphotransferase activity, for other substituted phosphate groups"/>
    <property type="evidence" value="ECO:0000250"/>
    <property type="project" value="UniProtKB"/>
</dbReference>
<dbReference type="GO" id="GO:0036380">
    <property type="term" value="F:UDP-N-acetylglucosamine-undecaprenyl-phosphate N-acetylglucosaminephosphotransferase activity"/>
    <property type="evidence" value="ECO:0007669"/>
    <property type="project" value="UniProtKB-UniRule"/>
</dbReference>
<dbReference type="GO" id="GO:0044038">
    <property type="term" value="P:cell wall macromolecule biosynthetic process"/>
    <property type="evidence" value="ECO:0000250"/>
    <property type="project" value="UniProtKB"/>
</dbReference>
<dbReference type="GO" id="GO:0071555">
    <property type="term" value="P:cell wall organization"/>
    <property type="evidence" value="ECO:0000250"/>
    <property type="project" value="UniProtKB"/>
</dbReference>
<dbReference type="GO" id="GO:0009246">
    <property type="term" value="P:enterobacterial common antigen biosynthetic process"/>
    <property type="evidence" value="ECO:0007669"/>
    <property type="project" value="UniProtKB-UniRule"/>
</dbReference>
<dbReference type="GO" id="GO:0009103">
    <property type="term" value="P:lipopolysaccharide biosynthetic process"/>
    <property type="evidence" value="ECO:0000250"/>
    <property type="project" value="UniProtKB"/>
</dbReference>
<dbReference type="GO" id="GO:0009243">
    <property type="term" value="P:O antigen biosynthetic process"/>
    <property type="evidence" value="ECO:0007669"/>
    <property type="project" value="UniProtKB-UniRule"/>
</dbReference>
<dbReference type="CDD" id="cd06853">
    <property type="entry name" value="GT_WecA_like"/>
    <property type="match status" value="1"/>
</dbReference>
<dbReference type="HAMAP" id="MF_02030">
    <property type="entry name" value="WecA_Gammaproteo"/>
    <property type="match status" value="1"/>
</dbReference>
<dbReference type="InterPro" id="IPR012750">
    <property type="entry name" value="ECA_WecA-rel"/>
</dbReference>
<dbReference type="InterPro" id="IPR000715">
    <property type="entry name" value="Glycosyl_transferase_4"/>
</dbReference>
<dbReference type="NCBIfam" id="TIGR02380">
    <property type="entry name" value="ECA_wecA"/>
    <property type="match status" value="1"/>
</dbReference>
<dbReference type="PANTHER" id="PTHR22926">
    <property type="entry name" value="PHOSPHO-N-ACETYLMURAMOYL-PENTAPEPTIDE-TRANSFERASE"/>
    <property type="match status" value="1"/>
</dbReference>
<dbReference type="PANTHER" id="PTHR22926:SF3">
    <property type="entry name" value="UNDECAPRENYL-PHOSPHATE ALPHA-N-ACETYLGLUCOSAMINYL 1-PHOSPHATE TRANSFERASE"/>
    <property type="match status" value="1"/>
</dbReference>
<dbReference type="Pfam" id="PF00953">
    <property type="entry name" value="Glycos_transf_4"/>
    <property type="match status" value="1"/>
</dbReference>
<proteinExistence type="inferred from homology"/>
<sequence length="367" mass="40957">MNLLTVSTDLISIFLFTTLFLFFARKVAKKVGLVDKPNFRKRHQGLIPLVGGISVYAGICFTFGIVDYYIPHASLYLACAGVLVFIGALDDRFDISVKIRATIQAAVGIVMMVFGKLYLSSLGYIFGSWEMVLGPFGYFLTLFAVWAAINAFNMVDGIDGLLGGLSCVSFAAIGMILWFDGQTSLAIWCFAMIAAILPYIMLNLGILGRRYKVFMGDAGSTLIGFTVIWILLETTQGKTHPISPVTALWIIAIPLMDMVAIMYRRLRKGMSPFSPDRQHIHHLIMRAGFTSRQAFVLITLAAALLASIGVLAEYSHFVPEWVMLVLFLLAFFLYGYCIKRAWKVARFIKRVKRRLRRNRGGSPNLTK</sequence>